<comment type="subunit">
    <text evidence="1">Forms oligomers.</text>
</comment>
<comment type="subcellular location">
    <subcellularLocation>
        <location evidence="1">Cytoplasm</location>
        <location evidence="1">Nucleoid</location>
    </subcellularLocation>
</comment>
<comment type="similarity">
    <text evidence="1">Belongs to the MraZ family.</text>
</comment>
<comment type="sequence caution" evidence="3">
    <conflict type="erroneous initiation">
        <sequence resource="EMBL-CDS" id="AAO89679"/>
    </conflict>
</comment>
<organism>
    <name type="scientific">Coxiella burnetii (strain RSA 493 / Nine Mile phase I)</name>
    <dbReference type="NCBI Taxonomy" id="227377"/>
    <lineage>
        <taxon>Bacteria</taxon>
        <taxon>Pseudomonadati</taxon>
        <taxon>Pseudomonadota</taxon>
        <taxon>Gammaproteobacteria</taxon>
        <taxon>Legionellales</taxon>
        <taxon>Coxiellaceae</taxon>
        <taxon>Coxiella</taxon>
    </lineage>
</organism>
<protein>
    <recommendedName>
        <fullName>Transcriptional regulator MraZ</fullName>
    </recommendedName>
</protein>
<accession>Q83F36</accession>
<keyword id="KW-0963">Cytoplasm</keyword>
<keyword id="KW-0238">DNA-binding</keyword>
<keyword id="KW-1185">Reference proteome</keyword>
<keyword id="KW-0677">Repeat</keyword>
<keyword id="KW-0804">Transcription</keyword>
<keyword id="KW-0805">Transcription regulation</keyword>
<evidence type="ECO:0000255" key="1">
    <source>
        <dbReference type="HAMAP-Rule" id="MF_01008"/>
    </source>
</evidence>
<evidence type="ECO:0000255" key="2">
    <source>
        <dbReference type="PROSITE-ProRule" id="PRU01076"/>
    </source>
</evidence>
<evidence type="ECO:0000305" key="3"/>
<feature type="chain" id="PRO_0000108475" description="Transcriptional regulator MraZ">
    <location>
        <begin position="1"/>
        <end position="152"/>
    </location>
</feature>
<feature type="domain" description="SpoVT-AbrB 1" evidence="2">
    <location>
        <begin position="5"/>
        <end position="52"/>
    </location>
</feature>
<feature type="domain" description="SpoVT-AbrB 2" evidence="2">
    <location>
        <begin position="81"/>
        <end position="124"/>
    </location>
</feature>
<reference key="1">
    <citation type="journal article" date="2003" name="Proc. Natl. Acad. Sci. U.S.A.">
        <title>Complete genome sequence of the Q-fever pathogen, Coxiella burnetii.</title>
        <authorList>
            <person name="Seshadri R."/>
            <person name="Paulsen I.T."/>
            <person name="Eisen J.A."/>
            <person name="Read T.D."/>
            <person name="Nelson K.E."/>
            <person name="Nelson W.C."/>
            <person name="Ward N.L."/>
            <person name="Tettelin H."/>
            <person name="Davidsen T.M."/>
            <person name="Beanan M.J."/>
            <person name="DeBoy R.T."/>
            <person name="Daugherty S.C."/>
            <person name="Brinkac L.M."/>
            <person name="Madupu R."/>
            <person name="Dodson R.J."/>
            <person name="Khouri H.M."/>
            <person name="Lee K.H."/>
            <person name="Carty H.A."/>
            <person name="Scanlan D."/>
            <person name="Heinzen R.A."/>
            <person name="Thompson H.A."/>
            <person name="Samuel J.E."/>
            <person name="Fraser C.M."/>
            <person name="Heidelberg J.F."/>
        </authorList>
    </citation>
    <scope>NUCLEOTIDE SEQUENCE [LARGE SCALE GENOMIC DNA]</scope>
    <source>
        <strain>RSA 493 / Nine Mile phase I</strain>
    </source>
</reference>
<proteinExistence type="inferred from homology"/>
<name>MRAZ_COXBU</name>
<gene>
    <name evidence="1" type="primary">mraZ</name>
    <name type="ordered locus">CBU_0115</name>
</gene>
<sequence length="152" mass="17339">MFRGLNPIAVDAKGRIAIPARYREPIESEADGILVVTIDTEERCLLIYTHPQWEQIEQKLENLPSYHPASRRIQRLLIGHATEVELDRSGRILIPPVLREYAGLGSMVMLVGQGKKFELWGKSQWETAREDWLAEELPKGDDLPPELRSLSL</sequence>
<dbReference type="EMBL" id="AE016828">
    <property type="protein sequence ID" value="AAO89679.2"/>
    <property type="status" value="ALT_INIT"/>
    <property type="molecule type" value="Genomic_DNA"/>
</dbReference>
<dbReference type="RefSeq" id="NP_819165.2">
    <property type="nucleotide sequence ID" value="NC_002971.3"/>
</dbReference>
<dbReference type="SMR" id="Q83F36"/>
<dbReference type="STRING" id="227377.CBU_0115"/>
<dbReference type="EnsemblBacteria" id="AAO89679">
    <property type="protein sequence ID" value="AAO89679"/>
    <property type="gene ID" value="CBU_0115"/>
</dbReference>
<dbReference type="GeneID" id="1207986"/>
<dbReference type="KEGG" id="cbu:CBU_0115"/>
<dbReference type="PATRIC" id="fig|227377.7.peg.118"/>
<dbReference type="eggNOG" id="COG2001">
    <property type="taxonomic scope" value="Bacteria"/>
</dbReference>
<dbReference type="HOGENOM" id="CLU_107907_2_0_6"/>
<dbReference type="OrthoDB" id="9807753at2"/>
<dbReference type="Proteomes" id="UP000002671">
    <property type="component" value="Chromosome"/>
</dbReference>
<dbReference type="GO" id="GO:0005737">
    <property type="term" value="C:cytoplasm"/>
    <property type="evidence" value="ECO:0007669"/>
    <property type="project" value="UniProtKB-UniRule"/>
</dbReference>
<dbReference type="GO" id="GO:0009295">
    <property type="term" value="C:nucleoid"/>
    <property type="evidence" value="ECO:0007669"/>
    <property type="project" value="UniProtKB-SubCell"/>
</dbReference>
<dbReference type="GO" id="GO:0003700">
    <property type="term" value="F:DNA-binding transcription factor activity"/>
    <property type="evidence" value="ECO:0000318"/>
    <property type="project" value="GO_Central"/>
</dbReference>
<dbReference type="GO" id="GO:0000976">
    <property type="term" value="F:transcription cis-regulatory region binding"/>
    <property type="evidence" value="ECO:0000318"/>
    <property type="project" value="GO_Central"/>
</dbReference>
<dbReference type="GO" id="GO:2000143">
    <property type="term" value="P:negative regulation of DNA-templated transcription initiation"/>
    <property type="evidence" value="ECO:0000318"/>
    <property type="project" value="GO_Central"/>
</dbReference>
<dbReference type="CDD" id="cd16321">
    <property type="entry name" value="MraZ_C"/>
    <property type="match status" value="1"/>
</dbReference>
<dbReference type="CDD" id="cd16320">
    <property type="entry name" value="MraZ_N"/>
    <property type="match status" value="1"/>
</dbReference>
<dbReference type="Gene3D" id="3.40.1550.20">
    <property type="entry name" value="Transcriptional regulator MraZ domain"/>
    <property type="match status" value="1"/>
</dbReference>
<dbReference type="HAMAP" id="MF_01008">
    <property type="entry name" value="MraZ"/>
    <property type="match status" value="1"/>
</dbReference>
<dbReference type="InterPro" id="IPR003444">
    <property type="entry name" value="MraZ"/>
</dbReference>
<dbReference type="InterPro" id="IPR035644">
    <property type="entry name" value="MraZ_C"/>
</dbReference>
<dbReference type="InterPro" id="IPR020603">
    <property type="entry name" value="MraZ_dom"/>
</dbReference>
<dbReference type="InterPro" id="IPR035642">
    <property type="entry name" value="MraZ_N"/>
</dbReference>
<dbReference type="InterPro" id="IPR038619">
    <property type="entry name" value="MraZ_sf"/>
</dbReference>
<dbReference type="InterPro" id="IPR007159">
    <property type="entry name" value="SpoVT-AbrB_dom"/>
</dbReference>
<dbReference type="InterPro" id="IPR037914">
    <property type="entry name" value="SpoVT-AbrB_sf"/>
</dbReference>
<dbReference type="NCBIfam" id="TIGR00242">
    <property type="entry name" value="division/cell wall cluster transcriptional repressor MraZ"/>
    <property type="match status" value="1"/>
</dbReference>
<dbReference type="PANTHER" id="PTHR34701">
    <property type="entry name" value="TRANSCRIPTIONAL REGULATOR MRAZ"/>
    <property type="match status" value="1"/>
</dbReference>
<dbReference type="PANTHER" id="PTHR34701:SF1">
    <property type="entry name" value="TRANSCRIPTIONAL REGULATOR MRAZ"/>
    <property type="match status" value="1"/>
</dbReference>
<dbReference type="Pfam" id="PF02381">
    <property type="entry name" value="MraZ"/>
    <property type="match status" value="2"/>
</dbReference>
<dbReference type="SUPFAM" id="SSF89447">
    <property type="entry name" value="AbrB/MazE/MraZ-like"/>
    <property type="match status" value="1"/>
</dbReference>
<dbReference type="PROSITE" id="PS51740">
    <property type="entry name" value="SPOVT_ABRB"/>
    <property type="match status" value="2"/>
</dbReference>